<proteinExistence type="inferred from homology"/>
<feature type="chain" id="PRO_1000068847" description="Probable alpha-L-glutamate ligase">
    <location>
        <begin position="1"/>
        <end position="301"/>
    </location>
</feature>
<feature type="domain" description="ATP-grasp" evidence="1">
    <location>
        <begin position="104"/>
        <end position="287"/>
    </location>
</feature>
<feature type="binding site" evidence="1">
    <location>
        <position position="141"/>
    </location>
    <ligand>
        <name>ATP</name>
        <dbReference type="ChEBI" id="CHEBI:30616"/>
    </ligand>
</feature>
<feature type="binding site" evidence="1">
    <location>
        <begin position="178"/>
        <end position="179"/>
    </location>
    <ligand>
        <name>ATP</name>
        <dbReference type="ChEBI" id="CHEBI:30616"/>
    </ligand>
</feature>
<feature type="binding site" evidence="1">
    <location>
        <position position="187"/>
    </location>
    <ligand>
        <name>ATP</name>
        <dbReference type="ChEBI" id="CHEBI:30616"/>
    </ligand>
</feature>
<feature type="binding site" evidence="1">
    <location>
        <begin position="211"/>
        <end position="213"/>
    </location>
    <ligand>
        <name>ATP</name>
        <dbReference type="ChEBI" id="CHEBI:30616"/>
    </ligand>
</feature>
<feature type="binding site" evidence="1">
    <location>
        <position position="248"/>
    </location>
    <ligand>
        <name>Mg(2+)</name>
        <dbReference type="ChEBI" id="CHEBI:18420"/>
        <label>1</label>
    </ligand>
</feature>
<feature type="binding site" evidence="1">
    <location>
        <position position="248"/>
    </location>
    <ligand>
        <name>Mn(2+)</name>
        <dbReference type="ChEBI" id="CHEBI:29035"/>
        <label>1</label>
    </ligand>
</feature>
<feature type="binding site" evidence="1">
    <location>
        <position position="260"/>
    </location>
    <ligand>
        <name>Mg(2+)</name>
        <dbReference type="ChEBI" id="CHEBI:18420"/>
        <label>1</label>
    </ligand>
</feature>
<feature type="binding site" evidence="1">
    <location>
        <position position="260"/>
    </location>
    <ligand>
        <name>Mg(2+)</name>
        <dbReference type="ChEBI" id="CHEBI:18420"/>
        <label>2</label>
    </ligand>
</feature>
<feature type="binding site" evidence="1">
    <location>
        <position position="260"/>
    </location>
    <ligand>
        <name>Mn(2+)</name>
        <dbReference type="ChEBI" id="CHEBI:29035"/>
        <label>1</label>
    </ligand>
</feature>
<feature type="binding site" evidence="1">
    <location>
        <position position="260"/>
    </location>
    <ligand>
        <name>Mn(2+)</name>
        <dbReference type="ChEBI" id="CHEBI:29035"/>
        <label>2</label>
    </ligand>
</feature>
<feature type="binding site" evidence="1">
    <location>
        <position position="262"/>
    </location>
    <ligand>
        <name>Mg(2+)</name>
        <dbReference type="ChEBI" id="CHEBI:18420"/>
        <label>2</label>
    </ligand>
</feature>
<feature type="binding site" evidence="1">
    <location>
        <position position="262"/>
    </location>
    <ligand>
        <name>Mn(2+)</name>
        <dbReference type="ChEBI" id="CHEBI:29035"/>
        <label>2</label>
    </ligand>
</feature>
<protein>
    <recommendedName>
        <fullName evidence="1">Probable alpha-L-glutamate ligase</fullName>
        <ecNumber evidence="1">6.3.2.-</ecNumber>
    </recommendedName>
</protein>
<accession>Q02EG7</accession>
<reference key="1">
    <citation type="journal article" date="2006" name="Genome Biol.">
        <title>Genomic analysis reveals that Pseudomonas aeruginosa virulence is combinatorial.</title>
        <authorList>
            <person name="Lee D.G."/>
            <person name="Urbach J.M."/>
            <person name="Wu G."/>
            <person name="Liberati N.T."/>
            <person name="Feinbaum R.L."/>
            <person name="Miyata S."/>
            <person name="Diggins L.T."/>
            <person name="He J."/>
            <person name="Saucier M."/>
            <person name="Deziel E."/>
            <person name="Friedman L."/>
            <person name="Li L."/>
            <person name="Grills G."/>
            <person name="Montgomery K."/>
            <person name="Kucherlapati R."/>
            <person name="Rahme L.G."/>
            <person name="Ausubel F.M."/>
        </authorList>
    </citation>
    <scope>NUCLEOTIDE SEQUENCE [LARGE SCALE GENOMIC DNA]</scope>
    <source>
        <strain>UCBPP-PA14</strain>
    </source>
</reference>
<organism>
    <name type="scientific">Pseudomonas aeruginosa (strain UCBPP-PA14)</name>
    <dbReference type="NCBI Taxonomy" id="208963"/>
    <lineage>
        <taxon>Bacteria</taxon>
        <taxon>Pseudomonadati</taxon>
        <taxon>Pseudomonadota</taxon>
        <taxon>Gammaproteobacteria</taxon>
        <taxon>Pseudomonadales</taxon>
        <taxon>Pseudomonadaceae</taxon>
        <taxon>Pseudomonas</taxon>
    </lineage>
</organism>
<keyword id="KW-0067">ATP-binding</keyword>
<keyword id="KW-0436">Ligase</keyword>
<keyword id="KW-0460">Magnesium</keyword>
<keyword id="KW-0464">Manganese</keyword>
<keyword id="KW-0479">Metal-binding</keyword>
<keyword id="KW-0547">Nucleotide-binding</keyword>
<keyword id="KW-0648">Protein biosynthesis</keyword>
<comment type="cofactor">
    <cofactor evidence="1">
        <name>Mg(2+)</name>
        <dbReference type="ChEBI" id="CHEBI:18420"/>
    </cofactor>
    <cofactor evidence="1">
        <name>Mn(2+)</name>
        <dbReference type="ChEBI" id="CHEBI:29035"/>
    </cofactor>
    <text evidence="1">Binds 2 magnesium or manganese ions per subunit.</text>
</comment>
<comment type="similarity">
    <text evidence="1">Belongs to the RimK family.</text>
</comment>
<sequence>MKIAVLSRNPRLYSTRRLVEAGRERGHEMVVIDTLRAYMNIASHKPQIHYRGQPLEGFDAVIPRIGASVTFYGCAVLRQFEMMGVFPLNESVAIARSRDKLRSLQLLSRKGIGLPVTGFAHSPDDVPDLIEMVGGAPLVIKLLEGTQGIGVVLCETEKAAESVLEAFMGLKHNIMVQEYIKEAGGADIRCFVVGDKVIASMKRQAAPGEFRSNLHRGGSASLIKITPEERMTAIRAARVMGLNVAGVDILRSNHGPLVMEVNSSPGLEGIESTTGKDIAGIIIQYLEKNGGPHLARTKGKG</sequence>
<dbReference type="EC" id="6.3.2.-" evidence="1"/>
<dbReference type="EMBL" id="CP000438">
    <property type="protein sequence ID" value="ABJ14581.1"/>
    <property type="molecule type" value="Genomic_DNA"/>
</dbReference>
<dbReference type="RefSeq" id="WP_003096254.1">
    <property type="nucleotide sequence ID" value="NZ_CP034244.1"/>
</dbReference>
<dbReference type="SMR" id="Q02EG7"/>
<dbReference type="GeneID" id="77223730"/>
<dbReference type="KEGG" id="pau:PA14_68660"/>
<dbReference type="PseudoCAP" id="PA14_68660"/>
<dbReference type="HOGENOM" id="CLU_054353_0_1_6"/>
<dbReference type="BioCyc" id="PAER208963:G1G74-5786-MONOMER"/>
<dbReference type="Proteomes" id="UP000000653">
    <property type="component" value="Chromosome"/>
</dbReference>
<dbReference type="GO" id="GO:0005737">
    <property type="term" value="C:cytoplasm"/>
    <property type="evidence" value="ECO:0007669"/>
    <property type="project" value="TreeGrafter"/>
</dbReference>
<dbReference type="GO" id="GO:0005524">
    <property type="term" value="F:ATP binding"/>
    <property type="evidence" value="ECO:0007669"/>
    <property type="project" value="UniProtKB-UniRule"/>
</dbReference>
<dbReference type="GO" id="GO:0046872">
    <property type="term" value="F:metal ion binding"/>
    <property type="evidence" value="ECO:0007669"/>
    <property type="project" value="UniProtKB-KW"/>
</dbReference>
<dbReference type="GO" id="GO:0018169">
    <property type="term" value="F:ribosomal S6-glutamic acid ligase activity"/>
    <property type="evidence" value="ECO:0007669"/>
    <property type="project" value="TreeGrafter"/>
</dbReference>
<dbReference type="GO" id="GO:0036211">
    <property type="term" value="P:protein modification process"/>
    <property type="evidence" value="ECO:0007669"/>
    <property type="project" value="InterPro"/>
</dbReference>
<dbReference type="GO" id="GO:0009432">
    <property type="term" value="P:SOS response"/>
    <property type="evidence" value="ECO:0007669"/>
    <property type="project" value="TreeGrafter"/>
</dbReference>
<dbReference type="GO" id="GO:0006412">
    <property type="term" value="P:translation"/>
    <property type="evidence" value="ECO:0007669"/>
    <property type="project" value="UniProtKB-KW"/>
</dbReference>
<dbReference type="FunFam" id="3.40.50.20:FF:000004">
    <property type="entry name" value="Probable alpha-L-glutamate ligase"/>
    <property type="match status" value="1"/>
</dbReference>
<dbReference type="FunFam" id="3.30.1490.20:FF:000005">
    <property type="entry name" value="Probable alpha-L-glutamate ligase 1"/>
    <property type="match status" value="1"/>
</dbReference>
<dbReference type="FunFam" id="3.30.470.20:FF:000016">
    <property type="entry name" value="Ribosomal protein S6--L-glutamate ligase"/>
    <property type="match status" value="1"/>
</dbReference>
<dbReference type="Gene3D" id="3.40.50.20">
    <property type="match status" value="1"/>
</dbReference>
<dbReference type="Gene3D" id="3.30.1490.20">
    <property type="entry name" value="ATP-grasp fold, A domain"/>
    <property type="match status" value="1"/>
</dbReference>
<dbReference type="Gene3D" id="3.30.470.20">
    <property type="entry name" value="ATP-grasp fold, B domain"/>
    <property type="match status" value="1"/>
</dbReference>
<dbReference type="HAMAP" id="MF_01552">
    <property type="entry name" value="RimK"/>
    <property type="match status" value="1"/>
</dbReference>
<dbReference type="InterPro" id="IPR011761">
    <property type="entry name" value="ATP-grasp"/>
</dbReference>
<dbReference type="InterPro" id="IPR013651">
    <property type="entry name" value="ATP-grasp_RimK-type"/>
</dbReference>
<dbReference type="InterPro" id="IPR013815">
    <property type="entry name" value="ATP_grasp_subdomain_1"/>
</dbReference>
<dbReference type="InterPro" id="IPR023533">
    <property type="entry name" value="RimK"/>
</dbReference>
<dbReference type="InterPro" id="IPR041107">
    <property type="entry name" value="Rimk_N"/>
</dbReference>
<dbReference type="InterPro" id="IPR004666">
    <property type="entry name" value="Rp_bS6_RimK/Lys_biosynth_LsyX"/>
</dbReference>
<dbReference type="NCBIfam" id="NF007764">
    <property type="entry name" value="PRK10446.1"/>
    <property type="match status" value="1"/>
</dbReference>
<dbReference type="NCBIfam" id="TIGR00768">
    <property type="entry name" value="rimK_fam"/>
    <property type="match status" value="1"/>
</dbReference>
<dbReference type="PANTHER" id="PTHR21621:SF7">
    <property type="entry name" value="RIBOSOMAL PROTEIN BS6--L-GLUTAMATE LIGASE"/>
    <property type="match status" value="1"/>
</dbReference>
<dbReference type="PANTHER" id="PTHR21621">
    <property type="entry name" value="RIBOSOMAL PROTEIN S6 MODIFICATION PROTEIN"/>
    <property type="match status" value="1"/>
</dbReference>
<dbReference type="Pfam" id="PF08443">
    <property type="entry name" value="RimK"/>
    <property type="match status" value="1"/>
</dbReference>
<dbReference type="Pfam" id="PF18030">
    <property type="entry name" value="Rimk_N"/>
    <property type="match status" value="1"/>
</dbReference>
<dbReference type="SUPFAM" id="SSF56059">
    <property type="entry name" value="Glutathione synthetase ATP-binding domain-like"/>
    <property type="match status" value="1"/>
</dbReference>
<dbReference type="PROSITE" id="PS50975">
    <property type="entry name" value="ATP_GRASP"/>
    <property type="match status" value="1"/>
</dbReference>
<gene>
    <name evidence="1" type="primary">rimK</name>
    <name type="ordered locus">PA14_68660</name>
</gene>
<evidence type="ECO:0000255" key="1">
    <source>
        <dbReference type="HAMAP-Rule" id="MF_01552"/>
    </source>
</evidence>
<name>RIMK_PSEAB</name>